<proteinExistence type="evidence at protein level"/>
<accession>Q00664</accession>
<accession>C8V209</accession>
<accession>Q5AZT3</accession>
<name>LIS1_EMENI</name>
<feature type="chain" id="PRO_0000051108" description="Nuclear distribution protein nudF">
    <location>
        <begin position="1"/>
        <end position="444"/>
    </location>
</feature>
<feature type="domain" description="LisH" evidence="2">
    <location>
        <begin position="9"/>
        <end position="41"/>
    </location>
</feature>
<feature type="repeat" description="WD 1">
    <location>
        <begin position="112"/>
        <end position="153"/>
    </location>
</feature>
<feature type="repeat" description="WD 2">
    <location>
        <begin position="155"/>
        <end position="195"/>
    </location>
</feature>
<feature type="repeat" description="WD 3">
    <location>
        <begin position="199"/>
        <end position="239"/>
    </location>
</feature>
<feature type="repeat" description="WD 4">
    <location>
        <begin position="243"/>
        <end position="282"/>
    </location>
</feature>
<feature type="repeat" description="WD 5">
    <location>
        <begin position="285"/>
        <end position="345"/>
    </location>
</feature>
<feature type="repeat" description="WD 6">
    <location>
        <begin position="347"/>
        <end position="386"/>
    </location>
</feature>
<feature type="repeat" description="WD 7">
    <location>
        <begin position="391"/>
        <end position="437"/>
    </location>
</feature>
<feature type="region of interest" description="Disordered" evidence="3">
    <location>
        <begin position="83"/>
        <end position="107"/>
    </location>
</feature>
<feature type="coiled-coil region" evidence="2">
    <location>
        <begin position="60"/>
        <end position="88"/>
    </location>
</feature>
<feature type="mutagenesis site" description="Impairs self-association; when associated with A-65; A-69; A-72; A-76; A-79 and A-83." evidence="5">
    <original>I</original>
    <variation>A</variation>
    <location>
        <position position="62"/>
    </location>
</feature>
<feature type="mutagenesis site" description="Impairs self-association; when associated with A-62; A-69; A-72; A-76; A-79 and A-83." evidence="5">
    <original>L</original>
    <variation>A</variation>
    <location>
        <position position="65"/>
    </location>
</feature>
<feature type="mutagenesis site" description="Impairs self-association; when associated with A-62; A-65; A-72; A-76; A-79 and A-83." evidence="5">
    <original>I</original>
    <variation>A</variation>
    <location>
        <position position="69"/>
    </location>
</feature>
<feature type="mutagenesis site" description="Impairs self-association; when associated with A-62; A-65; A-69; A-76; A-79 and A-83." evidence="5">
    <original>L</original>
    <variation>A</variation>
    <location>
        <position position="72"/>
    </location>
</feature>
<feature type="mutagenesis site" description="Impairs self-association." evidence="5">
    <original>L</original>
    <variation>E</variation>
    <location>
        <position position="72"/>
    </location>
</feature>
<feature type="mutagenesis site" description="Impairs self-association; when associated with A-62; A-65; A-69; A-72; A-79 and A-83." evidence="5">
    <original>V</original>
    <variation>A</variation>
    <location>
        <position position="76"/>
    </location>
</feature>
<feature type="mutagenesis site" description="Impairs self-association; when associated with A-62; A-65; A-69; A-72; A-76 and A-83." evidence="5">
    <original>L</original>
    <variation>A</variation>
    <location>
        <position position="79"/>
    </location>
</feature>
<feature type="mutagenesis site" description="Impairs self-association; when associated with A-62; A-65; A-69; A-72; A-76 and A-79." evidence="5">
    <original>L</original>
    <variation>A</variation>
    <location>
        <position position="83"/>
    </location>
</feature>
<sequence>MSQILTAPQAEALHKAMLAYLSVINAPQTAETLREELHFDESYNEATCKKFEGVLEKKWTGIARLQRRINDLEAEVRSLQAELEASPSAARAKNQDPTNWLPKPSSTHTLTSHRDAVTCVAFHPVFTSLASGSEDCTIKIWDWELGEIERTLKGHIRGVSGLDYGGQKGNTLLASCSSDLTIKLWDPSKDYANIRTLSGHDHSVSSVRFLTSNDNHLISASRDGTLRIWDVSTGFCVKVIKSATESWIRDVSPSFDGKWLVSGGRDQAITVWEVSSAEPKAALLGHENFIECCVFAPPASYEHLATLAGLKKPPPATSSCEFVATGARDKTIKLWEARGRLIKTLHGHDNWVRGLVFHPGGKYLFSVSDDKTIRCWDLSQEGRLVKTISGAHEHFVSCIRWAPSPNTDNPDPAGEKAGKKDAVKPSYRCVIATGCADNSVRVFS</sequence>
<protein>
    <recommendedName>
        <fullName evidence="2">Nuclear distribution protein nudF</fullName>
    </recommendedName>
    <alternativeName>
        <fullName evidence="2">Lissencephaly-1 homolog</fullName>
        <shortName evidence="2">LIS-1</shortName>
    </alternativeName>
    <alternativeName>
        <fullName>Nuclear migration protein nudF</fullName>
    </alternativeName>
</protein>
<comment type="function">
    <text evidence="2 6 7 8 9 10">Positively regulates the activity of the minus-end directed microtubule motor protein dynein. May enhance dynein-mediated microtubule sliding by targeting dynein to the microtubule plus end. Required for nuclear migration during vegetative growth as well as development. Required for retrograde early endosome (EE) transport from the hyphal tip. Required for localization of dynein to the mitotic spindle poles. Recruits additional proteins to the dynein complex at SPBs.</text>
</comment>
<comment type="subunit">
    <text evidence="1 4 9">Interacts with dynein (By similarity). Self-associates. Interacts with bnfA, nudC and nudE.</text>
</comment>
<comment type="interaction">
    <interactant intactId="EBI-1009311">
        <id>Q00664</id>
    </interactant>
    <interactant intactId="EBI-1009303">
        <id>O74689</id>
        <label>nudE</label>
    </interactant>
    <organismsDiffer>false</organismsDiffer>
    <experiments>3</experiments>
</comment>
<comment type="subcellular location">
    <subcellularLocation>
        <location>Cytoplasm</location>
        <location>Cytoskeleton</location>
    </subcellularLocation>
    <subcellularLocation>
        <location>Cytoplasm</location>
        <location>Cytoskeleton</location>
        <location>Spindle pole</location>
    </subcellularLocation>
    <text>Localizes to the plus ends of microtubules at the hyphal tip, and this requires clipA and nudE. Localizes to the mitotic spindle poles, specifically to the spindle pole bodies (SPBs).</text>
</comment>
<comment type="domain">
    <text evidence="2">Dimerization mediated by the LisH domain may be required to activate dynein.</text>
</comment>
<comment type="similarity">
    <text evidence="2">Belongs to the WD repeat LIS1/nudF family.</text>
</comment>
<organism>
    <name type="scientific">Emericella nidulans (strain FGSC A4 / ATCC 38163 / CBS 112.46 / NRRL 194 / M139)</name>
    <name type="common">Aspergillus nidulans</name>
    <dbReference type="NCBI Taxonomy" id="227321"/>
    <lineage>
        <taxon>Eukaryota</taxon>
        <taxon>Fungi</taxon>
        <taxon>Dikarya</taxon>
        <taxon>Ascomycota</taxon>
        <taxon>Pezizomycotina</taxon>
        <taxon>Eurotiomycetes</taxon>
        <taxon>Eurotiomycetidae</taxon>
        <taxon>Eurotiales</taxon>
        <taxon>Aspergillaceae</taxon>
        <taxon>Aspergillus</taxon>
        <taxon>Aspergillus subgen. Nidulantes</taxon>
    </lineage>
</organism>
<dbReference type="EMBL" id="U22009">
    <property type="protein sequence ID" value="AAA91301.1"/>
    <property type="molecule type" value="Genomic_DNA"/>
</dbReference>
<dbReference type="EMBL" id="AACD01000105">
    <property type="protein sequence ID" value="EAA57983.1"/>
    <property type="molecule type" value="Genomic_DNA"/>
</dbReference>
<dbReference type="EMBL" id="BN001301">
    <property type="protein sequence ID" value="CBF69989.1"/>
    <property type="molecule type" value="Genomic_DNA"/>
</dbReference>
<dbReference type="RefSeq" id="XP_663801.1">
    <property type="nucleotide sequence ID" value="XM_658709.1"/>
</dbReference>
<dbReference type="SMR" id="Q00664"/>
<dbReference type="BioGRID" id="1951557">
    <property type="interactions" value="1"/>
</dbReference>
<dbReference type="FunCoup" id="Q00664">
    <property type="interactions" value="55"/>
</dbReference>
<dbReference type="IntAct" id="Q00664">
    <property type="interactions" value="1"/>
</dbReference>
<dbReference type="STRING" id="227321.Q00664"/>
<dbReference type="EnsemblFungi" id="CBF69989">
    <property type="protein sequence ID" value="CBF69989"/>
    <property type="gene ID" value="ANIA_06197"/>
</dbReference>
<dbReference type="GeneID" id="2870783"/>
<dbReference type="KEGG" id="ani:ANIA_06197"/>
<dbReference type="VEuPathDB" id="FungiDB:AN6197"/>
<dbReference type="eggNOG" id="KOG0295">
    <property type="taxonomic scope" value="Eukaryota"/>
</dbReference>
<dbReference type="HOGENOM" id="CLU_000288_57_15_1"/>
<dbReference type="InParanoid" id="Q00664"/>
<dbReference type="OMA" id="CIRWAPP"/>
<dbReference type="OrthoDB" id="10264588at2759"/>
<dbReference type="Proteomes" id="UP000000560">
    <property type="component" value="Chromosome I"/>
</dbReference>
<dbReference type="GO" id="GO:0005881">
    <property type="term" value="C:cytoplasmic microtubule"/>
    <property type="evidence" value="ECO:0000318"/>
    <property type="project" value="GO_Central"/>
</dbReference>
<dbReference type="GO" id="GO:0000776">
    <property type="term" value="C:kinetochore"/>
    <property type="evidence" value="ECO:0000318"/>
    <property type="project" value="GO_Central"/>
</dbReference>
<dbReference type="GO" id="GO:0005875">
    <property type="term" value="C:microtubule associated complex"/>
    <property type="evidence" value="ECO:0000318"/>
    <property type="project" value="GO_Central"/>
</dbReference>
<dbReference type="GO" id="GO:0005635">
    <property type="term" value="C:nuclear envelope"/>
    <property type="evidence" value="ECO:0000318"/>
    <property type="project" value="GO_Central"/>
</dbReference>
<dbReference type="GO" id="GO:0000922">
    <property type="term" value="C:spindle pole"/>
    <property type="evidence" value="ECO:0007669"/>
    <property type="project" value="UniProtKB-SubCell"/>
</dbReference>
<dbReference type="GO" id="GO:0005816">
    <property type="term" value="C:spindle pole body"/>
    <property type="evidence" value="ECO:0000314"/>
    <property type="project" value="AspGD"/>
</dbReference>
<dbReference type="GO" id="GO:0070840">
    <property type="term" value="F:dynein complex binding"/>
    <property type="evidence" value="ECO:0000318"/>
    <property type="project" value="GO_Central"/>
</dbReference>
<dbReference type="GO" id="GO:0008017">
    <property type="term" value="F:microtubule binding"/>
    <property type="evidence" value="ECO:0000314"/>
    <property type="project" value="AspGD"/>
</dbReference>
<dbReference type="GO" id="GO:0051010">
    <property type="term" value="F:microtubule plus-end binding"/>
    <property type="evidence" value="ECO:0000318"/>
    <property type="project" value="GO_Central"/>
</dbReference>
<dbReference type="GO" id="GO:0051301">
    <property type="term" value="P:cell division"/>
    <property type="evidence" value="ECO:0007669"/>
    <property type="project" value="UniProtKB-KW"/>
</dbReference>
<dbReference type="GO" id="GO:0048315">
    <property type="term" value="P:conidium formation"/>
    <property type="evidence" value="ECO:0000315"/>
    <property type="project" value="AspGD"/>
</dbReference>
<dbReference type="GO" id="GO:0000132">
    <property type="term" value="P:establishment of mitotic spindle orientation"/>
    <property type="evidence" value="ECO:0000318"/>
    <property type="project" value="GO_Central"/>
</dbReference>
<dbReference type="GO" id="GO:0031023">
    <property type="term" value="P:microtubule organizing center organization"/>
    <property type="evidence" value="ECO:0000318"/>
    <property type="project" value="GO_Central"/>
</dbReference>
<dbReference type="GO" id="GO:0051012">
    <property type="term" value="P:microtubule sliding"/>
    <property type="evidence" value="ECO:0007669"/>
    <property type="project" value="UniProtKB-UniRule"/>
</dbReference>
<dbReference type="GO" id="GO:0007097">
    <property type="term" value="P:nuclear migration"/>
    <property type="evidence" value="ECO:0000315"/>
    <property type="project" value="AspGD"/>
</dbReference>
<dbReference type="GO" id="GO:0043935">
    <property type="term" value="P:sexual sporulation resulting in formation of a cellular spore"/>
    <property type="evidence" value="ECO:0000315"/>
    <property type="project" value="AspGD"/>
</dbReference>
<dbReference type="GO" id="GO:0047496">
    <property type="term" value="P:vesicle transport along microtubule"/>
    <property type="evidence" value="ECO:0000318"/>
    <property type="project" value="GO_Central"/>
</dbReference>
<dbReference type="CDD" id="cd00200">
    <property type="entry name" value="WD40"/>
    <property type="match status" value="1"/>
</dbReference>
<dbReference type="FunFam" id="2.130.10.10:FF:000342">
    <property type="entry name" value="Nuclear distribution protein PAC1"/>
    <property type="match status" value="1"/>
</dbReference>
<dbReference type="Gene3D" id="1.20.960.30">
    <property type="match status" value="1"/>
</dbReference>
<dbReference type="Gene3D" id="2.130.10.10">
    <property type="entry name" value="YVTN repeat-like/Quinoprotein amine dehydrogenase"/>
    <property type="match status" value="1"/>
</dbReference>
<dbReference type="HAMAP" id="MF_03141">
    <property type="entry name" value="lis1"/>
    <property type="match status" value="1"/>
</dbReference>
<dbReference type="InterPro" id="IPR017252">
    <property type="entry name" value="Dynein_regulator_LIS1"/>
</dbReference>
<dbReference type="InterPro" id="IPR020472">
    <property type="entry name" value="G-protein_beta_WD-40_rep"/>
</dbReference>
<dbReference type="InterPro" id="IPR037190">
    <property type="entry name" value="LIS1_N"/>
</dbReference>
<dbReference type="InterPro" id="IPR006594">
    <property type="entry name" value="LisH"/>
</dbReference>
<dbReference type="InterPro" id="IPR056795">
    <property type="entry name" value="PAC1-like_LisH-like_dom"/>
</dbReference>
<dbReference type="InterPro" id="IPR015943">
    <property type="entry name" value="WD40/YVTN_repeat-like_dom_sf"/>
</dbReference>
<dbReference type="InterPro" id="IPR019775">
    <property type="entry name" value="WD40_repeat_CS"/>
</dbReference>
<dbReference type="InterPro" id="IPR036322">
    <property type="entry name" value="WD40_repeat_dom_sf"/>
</dbReference>
<dbReference type="InterPro" id="IPR001680">
    <property type="entry name" value="WD40_rpt"/>
</dbReference>
<dbReference type="InterPro" id="IPR050349">
    <property type="entry name" value="WD_LIS1/nudF_dynein_reg"/>
</dbReference>
<dbReference type="PANTHER" id="PTHR44129">
    <property type="entry name" value="WD REPEAT-CONTAINING PROTEIN POP1"/>
    <property type="match status" value="1"/>
</dbReference>
<dbReference type="Pfam" id="PF24951">
    <property type="entry name" value="LisH_PAC1"/>
    <property type="match status" value="1"/>
</dbReference>
<dbReference type="Pfam" id="PF00400">
    <property type="entry name" value="WD40"/>
    <property type="match status" value="7"/>
</dbReference>
<dbReference type="PIRSF" id="PIRSF037647">
    <property type="entry name" value="Dynein_regulator_Lis1"/>
    <property type="match status" value="1"/>
</dbReference>
<dbReference type="PRINTS" id="PR00320">
    <property type="entry name" value="GPROTEINBRPT"/>
</dbReference>
<dbReference type="SMART" id="SM00320">
    <property type="entry name" value="WD40"/>
    <property type="match status" value="7"/>
</dbReference>
<dbReference type="SUPFAM" id="SSF109925">
    <property type="entry name" value="Lissencephaly-1 protein (Lis-1, PAF-AH alpha) N-terminal domain"/>
    <property type="match status" value="1"/>
</dbReference>
<dbReference type="SUPFAM" id="SSF50978">
    <property type="entry name" value="WD40 repeat-like"/>
    <property type="match status" value="1"/>
</dbReference>
<dbReference type="PROSITE" id="PS50896">
    <property type="entry name" value="LISH"/>
    <property type="match status" value="1"/>
</dbReference>
<dbReference type="PROSITE" id="PS00678">
    <property type="entry name" value="WD_REPEATS_1"/>
    <property type="match status" value="3"/>
</dbReference>
<dbReference type="PROSITE" id="PS50082">
    <property type="entry name" value="WD_REPEATS_2"/>
    <property type="match status" value="5"/>
</dbReference>
<dbReference type="PROSITE" id="PS50294">
    <property type="entry name" value="WD_REPEATS_REGION"/>
    <property type="match status" value="1"/>
</dbReference>
<evidence type="ECO:0000250" key="1"/>
<evidence type="ECO:0000255" key="2">
    <source>
        <dbReference type="HAMAP-Rule" id="MF_03141"/>
    </source>
</evidence>
<evidence type="ECO:0000256" key="3">
    <source>
        <dbReference type="SAM" id="MobiDB-lite"/>
    </source>
</evidence>
<evidence type="ECO:0000269" key="4">
    <source>
    </source>
</evidence>
<evidence type="ECO:0000269" key="5">
    <source>
    </source>
</evidence>
<evidence type="ECO:0000269" key="6">
    <source>
    </source>
</evidence>
<evidence type="ECO:0000269" key="7">
    <source>
    </source>
</evidence>
<evidence type="ECO:0000269" key="8">
    <source>
    </source>
</evidence>
<evidence type="ECO:0000269" key="9">
    <source>
    </source>
</evidence>
<evidence type="ECO:0000269" key="10">
    <source>
    </source>
</evidence>
<keyword id="KW-0131">Cell cycle</keyword>
<keyword id="KW-0132">Cell division</keyword>
<keyword id="KW-0175">Coiled coil</keyword>
<keyword id="KW-0963">Cytoplasm</keyword>
<keyword id="KW-0206">Cytoskeleton</keyword>
<keyword id="KW-0493">Microtubule</keyword>
<keyword id="KW-0498">Mitosis</keyword>
<keyword id="KW-1185">Reference proteome</keyword>
<keyword id="KW-0677">Repeat</keyword>
<keyword id="KW-0813">Transport</keyword>
<keyword id="KW-0853">WD repeat</keyword>
<gene>
    <name evidence="2" type="primary">nudF</name>
    <name evidence="2" type="synonym">lis1</name>
    <name type="synonym">pac1</name>
    <name type="ORF">AN6197</name>
</gene>
<reference key="1">
    <citation type="journal article" date="1995" name="Mol. Biol. Cell">
        <title>NudF, a nuclear migration gene in Aspergillus nidulans, is similar to the human LIS-1 gene required for neuronal migration.</title>
        <authorList>
            <person name="Xiang X."/>
            <person name="Osmani A.H."/>
            <person name="Osmani S.A."/>
            <person name="Xin M."/>
            <person name="Morris N.R."/>
        </authorList>
    </citation>
    <scope>NUCLEOTIDE SEQUENCE [GENOMIC DNA]</scope>
</reference>
<reference key="2">
    <citation type="journal article" date="2005" name="Nature">
        <title>Sequencing of Aspergillus nidulans and comparative analysis with A. fumigatus and A. oryzae.</title>
        <authorList>
            <person name="Galagan J.E."/>
            <person name="Calvo S.E."/>
            <person name="Cuomo C."/>
            <person name="Ma L.-J."/>
            <person name="Wortman J.R."/>
            <person name="Batzoglou S."/>
            <person name="Lee S.-I."/>
            <person name="Bastuerkmen M."/>
            <person name="Spevak C.C."/>
            <person name="Clutterbuck J."/>
            <person name="Kapitonov V."/>
            <person name="Jurka J."/>
            <person name="Scazzocchio C."/>
            <person name="Farman M.L."/>
            <person name="Butler J."/>
            <person name="Purcell S."/>
            <person name="Harris S."/>
            <person name="Braus G.H."/>
            <person name="Draht O."/>
            <person name="Busch S."/>
            <person name="D'Enfert C."/>
            <person name="Bouchier C."/>
            <person name="Goldman G.H."/>
            <person name="Bell-Pedersen D."/>
            <person name="Griffiths-Jones S."/>
            <person name="Doonan J.H."/>
            <person name="Yu J."/>
            <person name="Vienken K."/>
            <person name="Pain A."/>
            <person name="Freitag M."/>
            <person name="Selker E.U."/>
            <person name="Archer D.B."/>
            <person name="Penalva M.A."/>
            <person name="Oakley B.R."/>
            <person name="Momany M."/>
            <person name="Tanaka T."/>
            <person name="Kumagai T."/>
            <person name="Asai K."/>
            <person name="Machida M."/>
            <person name="Nierman W.C."/>
            <person name="Denning D.W."/>
            <person name="Caddick M.X."/>
            <person name="Hynes M."/>
            <person name="Paoletti M."/>
            <person name="Fischer R."/>
            <person name="Miller B.L."/>
            <person name="Dyer P.S."/>
            <person name="Sachs M.S."/>
            <person name="Osmani S.A."/>
            <person name="Birren B.W."/>
        </authorList>
    </citation>
    <scope>NUCLEOTIDE SEQUENCE [LARGE SCALE GENOMIC DNA]</scope>
    <source>
        <strain>FGSC A4 / ATCC 38163 / CBS 112.46 / NRRL 194 / M139</strain>
    </source>
</reference>
<reference key="3">
    <citation type="journal article" date="2009" name="Fungal Genet. Biol.">
        <title>The 2008 update of the Aspergillus nidulans genome annotation: a community effort.</title>
        <authorList>
            <person name="Wortman J.R."/>
            <person name="Gilsenan J.M."/>
            <person name="Joardar V."/>
            <person name="Deegan J."/>
            <person name="Clutterbuck J."/>
            <person name="Andersen M.R."/>
            <person name="Archer D."/>
            <person name="Bencina M."/>
            <person name="Braus G."/>
            <person name="Coutinho P."/>
            <person name="von Dohren H."/>
            <person name="Doonan J."/>
            <person name="Driessen A.J."/>
            <person name="Durek P."/>
            <person name="Espeso E."/>
            <person name="Fekete E."/>
            <person name="Flipphi M."/>
            <person name="Estrada C.G."/>
            <person name="Geysens S."/>
            <person name="Goldman G."/>
            <person name="de Groot P.W."/>
            <person name="Hansen K."/>
            <person name="Harris S.D."/>
            <person name="Heinekamp T."/>
            <person name="Helmstaedt K."/>
            <person name="Henrissat B."/>
            <person name="Hofmann G."/>
            <person name="Homan T."/>
            <person name="Horio T."/>
            <person name="Horiuchi H."/>
            <person name="James S."/>
            <person name="Jones M."/>
            <person name="Karaffa L."/>
            <person name="Karanyi Z."/>
            <person name="Kato M."/>
            <person name="Keller N."/>
            <person name="Kelly D.E."/>
            <person name="Kiel J.A."/>
            <person name="Kim J.M."/>
            <person name="van der Klei I.J."/>
            <person name="Klis F.M."/>
            <person name="Kovalchuk A."/>
            <person name="Krasevec N."/>
            <person name="Kubicek C.P."/>
            <person name="Liu B."/>
            <person name="Maccabe A."/>
            <person name="Meyer V."/>
            <person name="Mirabito P."/>
            <person name="Miskei M."/>
            <person name="Mos M."/>
            <person name="Mullins J."/>
            <person name="Nelson D.R."/>
            <person name="Nielsen J."/>
            <person name="Oakley B.R."/>
            <person name="Osmani S.A."/>
            <person name="Pakula T."/>
            <person name="Paszewski A."/>
            <person name="Paulsen I."/>
            <person name="Pilsyk S."/>
            <person name="Pocsi I."/>
            <person name="Punt P.J."/>
            <person name="Ram A.F."/>
            <person name="Ren Q."/>
            <person name="Robellet X."/>
            <person name="Robson G."/>
            <person name="Seiboth B."/>
            <person name="van Solingen P."/>
            <person name="Specht T."/>
            <person name="Sun J."/>
            <person name="Taheri-Talesh N."/>
            <person name="Takeshita N."/>
            <person name="Ussery D."/>
            <person name="vanKuyk P.A."/>
            <person name="Visser H."/>
            <person name="van de Vondervoort P.J."/>
            <person name="de Vries R.P."/>
            <person name="Walton J."/>
            <person name="Xiang X."/>
            <person name="Xiong Y."/>
            <person name="Zeng A.P."/>
            <person name="Brandt B.W."/>
            <person name="Cornell M.J."/>
            <person name="van den Hondel C.A."/>
            <person name="Visser J."/>
            <person name="Oliver S.G."/>
            <person name="Turner G."/>
        </authorList>
    </citation>
    <scope>GENOME REANNOTATION</scope>
    <source>
        <strain>FGSC A4 / ATCC 38163 / CBS 112.46 / NRRL 194 / M139</strain>
    </source>
</reference>
<reference key="4">
    <citation type="journal article" date="2000" name="J. Cell Biol.">
        <title>The LIS1-related NUDF protein of Aspergillus nidulans interacts with the coiled-coil domain of the NUDE/RO11 protein.</title>
        <authorList>
            <person name="Efimov V.P."/>
            <person name="Morris N.R."/>
        </authorList>
    </citation>
    <scope>INTERACTION WITH NUDE</scope>
</reference>
<reference key="5">
    <citation type="journal article" date="2001" name="Curr. Biol.">
        <title>The Aspergillus cytoplasmic dynein heavy chain and NUDF localize to microtubule ends and affect microtubule dynamics.</title>
        <authorList>
            <person name="Han G."/>
            <person name="Liu B."/>
            <person name="Zhang J."/>
            <person name="Zuo W."/>
            <person name="Morris N.R."/>
            <person name="Xiang X."/>
        </authorList>
    </citation>
    <scope>FUNCTION</scope>
    <scope>SUBCELLULAR LOCATION</scope>
</reference>
<reference key="6">
    <citation type="journal article" date="2001" name="J. Biol. Chem.">
        <title>Nudf, a fungal homolog of the human LIS1 protein, functions as a dimer in vivo.</title>
        <authorList>
            <person name="Ahn C."/>
            <person name="Morris N.R."/>
        </authorList>
    </citation>
    <scope>SELF-ASSOCIATION</scope>
    <scope>MUTAGENESIS OF ILE-62; LEU-65; ILE-69; LEU-72; VAL-76; LEU-79 AND LEU-83</scope>
</reference>
<reference key="7">
    <citation type="journal article" date="2003" name="Mol. Biol. Cell">
        <title>Roles of NUDE and NUDF proteins of Aspergillus nidulans: insights from intracellular localization and overexpression effects.</title>
        <authorList>
            <person name="Efimov V.P."/>
        </authorList>
    </citation>
    <scope>SUBCELLULAR LOCATION</scope>
</reference>
<reference key="8">
    <citation type="journal article" date="2005" name="Mol. Biol. Cell">
        <title>Cytoplasmic dynein's mitotic spindle pole localization requires a functional anaphase-promoting complex, gamma-tubulin, and NUDF/LIS1 in Aspergillus nidulans.</title>
        <authorList>
            <person name="Li S."/>
            <person name="Oakley C.E."/>
            <person name="Chen G."/>
            <person name="Han X."/>
            <person name="Oakley B.R."/>
            <person name="Xiang X."/>
        </authorList>
    </citation>
    <scope>FUNCTION</scope>
    <scope>SUBCELLULAR LOCATION</scope>
</reference>
<reference key="9">
    <citation type="journal article" date="2006" name="Mol. Biol. Cell">
        <title>CLIP-170 homologue and NUDE play overlapping roles in NUDF localization in Aspergillus nidulans.</title>
        <authorList>
            <person name="Efimov V.P."/>
            <person name="Zhang J."/>
            <person name="Xiang X."/>
        </authorList>
    </citation>
    <scope>FUNCTION</scope>
    <scope>SUBCELLULAR LOCATION</scope>
</reference>
<reference key="10">
    <citation type="journal article" date="2008" name="Eukaryot. Cell">
        <title>The nuclear migration protein NUDF/LIS1 forms a complex with NUDC and BNFA at spindle pole bodies.</title>
        <authorList>
            <person name="Helmstaedt K."/>
            <person name="Laubinger K."/>
            <person name="Vosskuhl K."/>
            <person name="Bayram O."/>
            <person name="Busch S."/>
            <person name="Hoppert M."/>
            <person name="Valerius O."/>
            <person name="Seiler S."/>
            <person name="Braus G.H."/>
        </authorList>
    </citation>
    <scope>FUNCTION</scope>
    <scope>INTERACTION WITH BNFA AND NUDC</scope>
    <scope>SUBCELLULAR LOCATION</scope>
</reference>
<reference key="11">
    <citation type="journal article" date="2010" name="J. Cell Sci.">
        <title>The microtubule plus-end localization of Aspergillus dynein is important for dynein-early-endosome interaction but not for dynein ATPase activation.</title>
        <authorList>
            <person name="Zhang J."/>
            <person name="Zhuang L."/>
            <person name="Lee Y."/>
            <person name="Abenza J.F."/>
            <person name="Penalva M.A."/>
            <person name="Xiang X."/>
        </authorList>
    </citation>
    <scope>FUNCTION</scope>
</reference>